<name>BOXB_AROEV</name>
<accession>Q9AIX7</accession>
<gene>
    <name type="primary">boxB</name>
</gene>
<protein>
    <recommendedName>
        <fullName>Benzoyl-CoA oxygenase component B</fullName>
        <ecNumber evidence="2">1.14.13.208</ecNumber>
    </recommendedName>
    <alternativeName>
        <fullName>Benzoyl-CoA 2,3-dioxygenase subunit B</fullName>
    </alternativeName>
    <alternativeName>
        <fullName>Benzoyl-CoA dioxygenase oxygenase component</fullName>
    </alternativeName>
</protein>
<evidence type="ECO:0000269" key="1">
    <source>
    </source>
</evidence>
<evidence type="ECO:0000269" key="2">
    <source>
    </source>
</evidence>
<evidence type="ECO:0000305" key="3"/>
<evidence type="ECO:0007829" key="4">
    <source>
        <dbReference type="PDB" id="3PER"/>
    </source>
</evidence>
<evidence type="ECO:0007829" key="5">
    <source>
        <dbReference type="PDB" id="3PF7"/>
    </source>
</evidence>
<dbReference type="EC" id="1.14.13.208" evidence="2"/>
<dbReference type="EMBL" id="AF220510">
    <property type="protein sequence ID" value="AAK00599.1"/>
    <property type="molecule type" value="Genomic_DNA"/>
</dbReference>
<dbReference type="EMBL" id="AF548005">
    <property type="protein sequence ID" value="AAN39376.1"/>
    <property type="molecule type" value="Genomic_DNA"/>
</dbReference>
<dbReference type="RefSeq" id="WP_169125309.1">
    <property type="nucleotide sequence ID" value="NZ_CAWPLS010000221.1"/>
</dbReference>
<dbReference type="PDB" id="3PER">
    <property type="method" value="X-ray"/>
    <property type="resolution" value="2.10 A"/>
    <property type="chains" value="A/B=1-473"/>
</dbReference>
<dbReference type="PDB" id="3PF7">
    <property type="method" value="X-ray"/>
    <property type="resolution" value="1.90 A"/>
    <property type="chains" value="A/B=1-473"/>
</dbReference>
<dbReference type="PDB" id="3PM5">
    <property type="method" value="X-ray"/>
    <property type="resolution" value="2.30 A"/>
    <property type="chains" value="A/B/C/D=1-473"/>
</dbReference>
<dbReference type="PDB" id="3Q1G">
    <property type="method" value="X-ray"/>
    <property type="resolution" value="2.50 A"/>
    <property type="chains" value="A/B/C/D=1-473"/>
</dbReference>
<dbReference type="PDBsum" id="3PER"/>
<dbReference type="PDBsum" id="3PF7"/>
<dbReference type="PDBsum" id="3PM5"/>
<dbReference type="PDBsum" id="3Q1G"/>
<dbReference type="SMR" id="Q9AIX7"/>
<dbReference type="KEGG" id="ag:AAN39376"/>
<dbReference type="BioCyc" id="MetaCyc:MONOMER-3143"/>
<dbReference type="BRENDA" id="1.14.13.208">
    <property type="organism ID" value="603"/>
</dbReference>
<dbReference type="SABIO-RK" id="Q9AIX7"/>
<dbReference type="EvolutionaryTrace" id="Q9AIX7"/>
<dbReference type="GO" id="GO:0005829">
    <property type="term" value="C:cytosol"/>
    <property type="evidence" value="ECO:0007669"/>
    <property type="project" value="TreeGrafter"/>
</dbReference>
<dbReference type="GO" id="GO:0051213">
    <property type="term" value="F:dioxygenase activity"/>
    <property type="evidence" value="ECO:0007669"/>
    <property type="project" value="UniProtKB-KW"/>
</dbReference>
<dbReference type="GO" id="GO:0046872">
    <property type="term" value="F:metal ion binding"/>
    <property type="evidence" value="ECO:0007669"/>
    <property type="project" value="UniProtKB-KW"/>
</dbReference>
<dbReference type="GO" id="GO:0010124">
    <property type="term" value="P:phenylacetate catabolic process"/>
    <property type="evidence" value="ECO:0007669"/>
    <property type="project" value="TreeGrafter"/>
</dbReference>
<dbReference type="Gene3D" id="1.10.620.20">
    <property type="entry name" value="Ribonucleotide Reductase, subunit A"/>
    <property type="match status" value="1"/>
</dbReference>
<dbReference type="InterPro" id="IPR052703">
    <property type="entry name" value="Aromatic_CoA_ox/epox"/>
</dbReference>
<dbReference type="InterPro" id="IPR017635">
    <property type="entry name" value="Benzoyl_CoA_Oase_BoxB"/>
</dbReference>
<dbReference type="InterPro" id="IPR009078">
    <property type="entry name" value="Ferritin-like_SF"/>
</dbReference>
<dbReference type="InterPro" id="IPR012348">
    <property type="entry name" value="RNR-like"/>
</dbReference>
<dbReference type="NCBIfam" id="TIGR03225">
    <property type="entry name" value="benzo_boxB"/>
    <property type="match status" value="1"/>
</dbReference>
<dbReference type="PANTHER" id="PTHR30458:SF0">
    <property type="entry name" value="1,2-PHENYLACETYL-COA EPOXIDASE, SUBUNIT C"/>
    <property type="match status" value="1"/>
</dbReference>
<dbReference type="PANTHER" id="PTHR30458">
    <property type="entry name" value="PHENYLACETIC ACID DEGRADATION PROTEIN PAA"/>
    <property type="match status" value="1"/>
</dbReference>
<dbReference type="SUPFAM" id="SSF47240">
    <property type="entry name" value="Ferritin-like"/>
    <property type="match status" value="1"/>
</dbReference>
<reference key="1">
    <citation type="journal article" date="2001" name="J. Bacteriol.">
        <title>Reinvestigation of a new type of aerobic benzoate metabolism in the proteobacterium Azoarcus evansii.</title>
        <authorList>
            <person name="Mohamed M.E.-S."/>
            <person name="Zaar A."/>
            <person name="Ebenau-Jehle C."/>
            <person name="Fuchs G."/>
        </authorList>
    </citation>
    <scope>NUCLEOTIDE SEQUENCE [GENOMIC DNA]</scope>
    <scope>PROTEIN SEQUENCE OF 2-10</scope>
    <scope>INDUCTION</scope>
    <source>
        <strain>DSM 6898 / NBRC 107771 / KB740</strain>
    </source>
</reference>
<reference key="2">
    <citation type="journal article" date="2002" name="J. Bacteriol.">
        <title>Genes coding for a new pathway of aerobic benzoate metabolism in Azoarcus evansii.</title>
        <authorList>
            <person name="Gescher J."/>
            <person name="Zaar A."/>
            <person name="Mohamed M.E.-S."/>
            <person name="Schaegger H."/>
            <person name="Fuchs G."/>
        </authorList>
    </citation>
    <scope>NUCLEOTIDE SEQUENCE [GENOMIC DNA]</scope>
    <source>
        <strain>DSM 6898 / NBRC 107771 / KB740</strain>
    </source>
</reference>
<reference key="3">
    <citation type="journal article" date="2004" name="Mol. Microbiol.">
        <title>New enzymes involved in aerobic benzoate metabolism in Azoarcus evansii.</title>
        <authorList>
            <person name="Zaar A."/>
            <person name="Gescher J."/>
            <person name="Eisenreich W."/>
            <person name="Bacher A."/>
            <person name="Fuchs G."/>
        </authorList>
    </citation>
    <scope>PROTEIN SEQUENCE OF 1-9</scope>
    <scope>CATALYTIC ACTIVITY</scope>
    <scope>FUNCTION</scope>
    <scope>COFACTOR</scope>
    <scope>SUBUNIT</scope>
    <scope>BIOPHYSICOCHEMICAL PROPERTIES</scope>
    <source>
        <strain>DSM 6898 / NBRC 107771 / KB740</strain>
    </source>
</reference>
<feature type="chain" id="PRO_0000350727" description="Benzoyl-CoA oxygenase component B">
    <location>
        <begin position="1"/>
        <end position="473"/>
    </location>
</feature>
<feature type="strand" evidence="5">
    <location>
        <begin position="10"/>
        <end position="12"/>
    </location>
</feature>
<feature type="helix" evidence="5">
    <location>
        <begin position="14"/>
        <end position="16"/>
    </location>
</feature>
<feature type="helix" evidence="5">
    <location>
        <begin position="18"/>
        <end position="38"/>
    </location>
</feature>
<feature type="strand" evidence="5">
    <location>
        <begin position="47"/>
        <end position="52"/>
    </location>
</feature>
<feature type="strand" evidence="5">
    <location>
        <begin position="54"/>
        <end position="57"/>
    </location>
</feature>
<feature type="helix" evidence="5">
    <location>
        <begin position="58"/>
        <end position="61"/>
    </location>
</feature>
<feature type="strand" evidence="5">
    <location>
        <begin position="63"/>
        <end position="67"/>
    </location>
</feature>
<feature type="helix" evidence="5">
    <location>
        <begin position="69"/>
        <end position="71"/>
    </location>
</feature>
<feature type="turn" evidence="5">
    <location>
        <begin position="91"/>
        <end position="94"/>
    </location>
</feature>
<feature type="strand" evidence="5">
    <location>
        <begin position="98"/>
        <end position="100"/>
    </location>
</feature>
<feature type="helix" evidence="5">
    <location>
        <begin position="103"/>
        <end position="105"/>
    </location>
</feature>
<feature type="helix" evidence="5">
    <location>
        <begin position="106"/>
        <end position="127"/>
    </location>
</feature>
<feature type="helix" evidence="5">
    <location>
        <begin position="130"/>
        <end position="133"/>
    </location>
</feature>
<feature type="helix" evidence="5">
    <location>
        <begin position="137"/>
        <end position="164"/>
    </location>
</feature>
<feature type="helix" evidence="5">
    <location>
        <begin position="166"/>
        <end position="178"/>
    </location>
</feature>
<feature type="strand" evidence="5">
    <location>
        <begin position="184"/>
        <end position="186"/>
    </location>
</feature>
<feature type="helix" evidence="5">
    <location>
        <begin position="191"/>
        <end position="193"/>
    </location>
</feature>
<feature type="helix" evidence="5">
    <location>
        <begin position="200"/>
        <end position="209"/>
    </location>
</feature>
<feature type="helix" evidence="5">
    <location>
        <begin position="211"/>
        <end position="221"/>
    </location>
</feature>
<feature type="helix" evidence="5">
    <location>
        <begin position="227"/>
        <end position="265"/>
    </location>
</feature>
<feature type="helix" evidence="5">
    <location>
        <begin position="270"/>
        <end position="275"/>
    </location>
</feature>
<feature type="helix" evidence="5">
    <location>
        <begin position="281"/>
        <end position="296"/>
    </location>
</feature>
<feature type="helix" evidence="5">
    <location>
        <begin position="297"/>
        <end position="299"/>
    </location>
</feature>
<feature type="helix" evidence="5">
    <location>
        <begin position="305"/>
        <end position="312"/>
    </location>
</feature>
<feature type="helix" evidence="5">
    <location>
        <begin position="321"/>
        <end position="323"/>
    </location>
</feature>
<feature type="strand" evidence="5">
    <location>
        <begin position="334"/>
        <end position="341"/>
    </location>
</feature>
<feature type="strand" evidence="5">
    <location>
        <begin position="344"/>
        <end position="351"/>
    </location>
</feature>
<feature type="helix" evidence="5">
    <location>
        <begin position="352"/>
        <end position="355"/>
    </location>
</feature>
<feature type="helix" evidence="5">
    <location>
        <begin position="356"/>
        <end position="382"/>
    </location>
</feature>
<feature type="turn" evidence="5">
    <location>
        <begin position="393"/>
        <end position="396"/>
    </location>
</feature>
<feature type="strand" evidence="4">
    <location>
        <begin position="398"/>
        <end position="400"/>
    </location>
</feature>
<feature type="turn" evidence="5">
    <location>
        <begin position="401"/>
        <end position="404"/>
    </location>
</feature>
<feature type="strand" evidence="5">
    <location>
        <begin position="405"/>
        <end position="407"/>
    </location>
</feature>
<feature type="helix" evidence="5">
    <location>
        <begin position="416"/>
        <end position="422"/>
    </location>
</feature>
<feature type="helix" evidence="5">
    <location>
        <begin position="423"/>
        <end position="425"/>
    </location>
</feature>
<feature type="helix" evidence="5">
    <location>
        <begin position="430"/>
        <end position="439"/>
    </location>
</feature>
<keyword id="KW-0002">3D-structure</keyword>
<keyword id="KW-0058">Aromatic hydrocarbons catabolism</keyword>
<keyword id="KW-0223">Dioxygenase</keyword>
<keyword id="KW-0903">Direct protein sequencing</keyword>
<keyword id="KW-0408">Iron</keyword>
<keyword id="KW-0479">Metal-binding</keyword>
<keyword id="KW-0521">NADP</keyword>
<keyword id="KW-0560">Oxidoreductase</keyword>
<proteinExistence type="evidence at protein level"/>
<sequence>MINYSERIPNNVNLNENKTLQRALEQWQPSFLNWWDDMGPENSSNYDVYLRTAVSVDPKGWADFGYVKMHDYRWGIFLAPQEGEKKITFGEHKGQDVWQEVPGEYRSTLRRIIVTQGDTEPASVEQQRHLGLTAPSLYDLRNLFQVNVEEGRHLWAMVYLLHAHFGRDGREEGEALLERRSGDEDNPRILTAFNEKTPDWLSFFMFTFITDRDGKFQLASLAESAFDPLARTCKFMLTEEAHHLFVGESGIARVIQRTCEVMKELGTDDPAKLRAAGVIDLPTLQKYLNFHYSVTSDLYGAEISSNAATYYTNGLKGRFEEEKIGDDHKLQNSEYEVMDVAGDKILTRHVPALSALNERLRDDWITDVQAGVDRWNRIPAKFGFDFRFTLPHKGFHRKIGMFADVHVSPDGRLISEAEWTHQHKNWLPTESDRLYVHSLMGRCLEPGKFANWIAAPARGINNQPVNFEYVRFN</sequence>
<organism>
    <name type="scientific">Aromatoleum evansii</name>
    <name type="common">Azoarcus evansii</name>
    <dbReference type="NCBI Taxonomy" id="59406"/>
    <lineage>
        <taxon>Bacteria</taxon>
        <taxon>Pseudomonadati</taxon>
        <taxon>Pseudomonadota</taxon>
        <taxon>Betaproteobacteria</taxon>
        <taxon>Rhodocyclales</taxon>
        <taxon>Rhodocyclaceae</taxon>
        <taxon>Aromatoleum</taxon>
    </lineage>
</organism>
<comment type="function">
    <text evidence="2">The BoxA/BoxB complex catalyzes the aerobic reduction/oxygenation of the aromatic ring of benzoyl-CoA to form 2,3-epoxy-2,3-dihydrobenzoyl-CoA. BoxB acts as the benzoyl-CoA oxygenase, after being reduced by the reductase component BoxA. BoxAB does not act on NADH or benzoate.</text>
</comment>
<comment type="catalytic activity">
    <reaction evidence="2">
        <text>benzoyl-CoA + NADPH + O2 + H(+) = 2,3-epoxy-2,3-dihydrobenzoyl-CoA + NADP(+) + H2O</text>
        <dbReference type="Rhea" id="RHEA:48312"/>
        <dbReference type="ChEBI" id="CHEBI:15377"/>
        <dbReference type="ChEBI" id="CHEBI:15378"/>
        <dbReference type="ChEBI" id="CHEBI:15379"/>
        <dbReference type="ChEBI" id="CHEBI:57369"/>
        <dbReference type="ChEBI" id="CHEBI:57783"/>
        <dbReference type="ChEBI" id="CHEBI:58349"/>
        <dbReference type="ChEBI" id="CHEBI:88118"/>
        <dbReference type="EC" id="1.14.13.208"/>
    </reaction>
</comment>
<comment type="cofactor">
    <cofactor evidence="2">
        <name>Fe cation</name>
        <dbReference type="ChEBI" id="CHEBI:24875"/>
    </cofactor>
</comment>
<comment type="biophysicochemical properties">
    <kinetics>
        <KM evidence="2">0.03 mM for benzoyl-CoA</KM>
    </kinetics>
</comment>
<comment type="subunit">
    <text evidence="2">Monomer. The subunit composition of the active BoxA/BoxB protein complex is not known.</text>
</comment>
<comment type="induction">
    <text evidence="1">By benzoate.</text>
</comment>
<comment type="similarity">
    <text evidence="3">Belongs to the benzoyl-CoA oxygenase component B family.</text>
</comment>